<dbReference type="EC" id="7.3.2.2" evidence="1"/>
<dbReference type="EMBL" id="CP000267">
    <property type="protein sequence ID" value="ABD69347.1"/>
    <property type="molecule type" value="Genomic_DNA"/>
</dbReference>
<dbReference type="RefSeq" id="WP_011463915.1">
    <property type="nucleotide sequence ID" value="NC_007908.1"/>
</dbReference>
<dbReference type="SMR" id="Q21Y06"/>
<dbReference type="STRING" id="338969.Rfer_1616"/>
<dbReference type="KEGG" id="rfr:Rfer_1616"/>
<dbReference type="eggNOG" id="COG3638">
    <property type="taxonomic scope" value="Bacteria"/>
</dbReference>
<dbReference type="HOGENOM" id="CLU_000604_1_22_4"/>
<dbReference type="OrthoDB" id="9802264at2"/>
<dbReference type="Proteomes" id="UP000008332">
    <property type="component" value="Chromosome"/>
</dbReference>
<dbReference type="GO" id="GO:0005886">
    <property type="term" value="C:plasma membrane"/>
    <property type="evidence" value="ECO:0007669"/>
    <property type="project" value="UniProtKB-SubCell"/>
</dbReference>
<dbReference type="GO" id="GO:0015416">
    <property type="term" value="F:ABC-type phosphonate transporter activity"/>
    <property type="evidence" value="ECO:0007669"/>
    <property type="project" value="UniProtKB-EC"/>
</dbReference>
<dbReference type="GO" id="GO:0005524">
    <property type="term" value="F:ATP binding"/>
    <property type="evidence" value="ECO:0007669"/>
    <property type="project" value="UniProtKB-KW"/>
</dbReference>
<dbReference type="GO" id="GO:0016887">
    <property type="term" value="F:ATP hydrolysis activity"/>
    <property type="evidence" value="ECO:0007669"/>
    <property type="project" value="InterPro"/>
</dbReference>
<dbReference type="Gene3D" id="3.40.50.300">
    <property type="entry name" value="P-loop containing nucleotide triphosphate hydrolases"/>
    <property type="match status" value="1"/>
</dbReference>
<dbReference type="InterPro" id="IPR003593">
    <property type="entry name" value="AAA+_ATPase"/>
</dbReference>
<dbReference type="InterPro" id="IPR003439">
    <property type="entry name" value="ABC_transporter-like_ATP-bd"/>
</dbReference>
<dbReference type="InterPro" id="IPR017871">
    <property type="entry name" value="ABC_transporter-like_CS"/>
</dbReference>
<dbReference type="InterPro" id="IPR027417">
    <property type="entry name" value="P-loop_NTPase"/>
</dbReference>
<dbReference type="PANTHER" id="PTHR42794">
    <property type="entry name" value="HEMIN IMPORT ATP-BINDING PROTEIN HMUV"/>
    <property type="match status" value="1"/>
</dbReference>
<dbReference type="PANTHER" id="PTHR42794:SF1">
    <property type="entry name" value="HEMIN IMPORT ATP-BINDING PROTEIN HMUV"/>
    <property type="match status" value="1"/>
</dbReference>
<dbReference type="Pfam" id="PF00005">
    <property type="entry name" value="ABC_tran"/>
    <property type="match status" value="1"/>
</dbReference>
<dbReference type="SMART" id="SM00382">
    <property type="entry name" value="AAA"/>
    <property type="match status" value="1"/>
</dbReference>
<dbReference type="SUPFAM" id="SSF52540">
    <property type="entry name" value="P-loop containing nucleoside triphosphate hydrolases"/>
    <property type="match status" value="1"/>
</dbReference>
<dbReference type="PROSITE" id="PS00211">
    <property type="entry name" value="ABC_TRANSPORTER_1"/>
    <property type="match status" value="1"/>
</dbReference>
<dbReference type="PROSITE" id="PS50893">
    <property type="entry name" value="ABC_TRANSPORTER_2"/>
    <property type="match status" value="1"/>
</dbReference>
<dbReference type="PROSITE" id="PS51249">
    <property type="entry name" value="PHNC"/>
    <property type="match status" value="1"/>
</dbReference>
<sequence>MKISLNGISVQHPSAKPGAVPALREQNLTVRAGEQLAIIGPSGAGKTTLLHLLACALKPSAGSMLLNDQDPWQLSRGALQKLRGALFLAPQVPPLPPRQRVVTAVLAGRLPNESLWASLRSLFYPTDIALAERALAGFDVGDKLFDRVDRLSGGERQRVGLARALVSQASLILVDEPLSALDPTRSQHAIETLTRAAQERGATLVATLHHVEMALAHFPRIVGLRDGQVAFDLPAAEVTPELLQALYAQHLHELTGLANLEADDLPTDPAPVVMHCR</sequence>
<organism>
    <name type="scientific">Albidiferax ferrireducens (strain ATCC BAA-621 / DSM 15236 / T118)</name>
    <name type="common">Rhodoferax ferrireducens</name>
    <dbReference type="NCBI Taxonomy" id="338969"/>
    <lineage>
        <taxon>Bacteria</taxon>
        <taxon>Pseudomonadati</taxon>
        <taxon>Pseudomonadota</taxon>
        <taxon>Betaproteobacteria</taxon>
        <taxon>Burkholderiales</taxon>
        <taxon>Comamonadaceae</taxon>
        <taxon>Rhodoferax</taxon>
    </lineage>
</organism>
<comment type="function">
    <text evidence="1">Part of the ABC transporter complex PhnCDE involved in phosphonates import. Responsible for energy coupling to the transport system.</text>
</comment>
<comment type="catalytic activity">
    <reaction evidence="1">
        <text>phosphonate(out) + ATP + H2O = phosphonate(in) + ADP + phosphate + H(+)</text>
        <dbReference type="Rhea" id="RHEA:18065"/>
        <dbReference type="ChEBI" id="CHEBI:15377"/>
        <dbReference type="ChEBI" id="CHEBI:15378"/>
        <dbReference type="ChEBI" id="CHEBI:16215"/>
        <dbReference type="ChEBI" id="CHEBI:30616"/>
        <dbReference type="ChEBI" id="CHEBI:43474"/>
        <dbReference type="ChEBI" id="CHEBI:456216"/>
        <dbReference type="EC" id="7.3.2.2"/>
    </reaction>
</comment>
<comment type="subunit">
    <text evidence="1">The complex is composed of two ATP-binding proteins (PhnC), two transmembrane proteins (PhnE) and a solute-binding protein (PhnD).</text>
</comment>
<comment type="subcellular location">
    <subcellularLocation>
        <location evidence="1">Cell inner membrane</location>
        <topology evidence="1">Peripheral membrane protein</topology>
    </subcellularLocation>
</comment>
<comment type="similarity">
    <text evidence="1">Belongs to the ABC transporter superfamily. Phosphonates importer (TC 3.A.1.9.1) family.</text>
</comment>
<gene>
    <name evidence="1" type="primary">phnC2</name>
    <name type="ordered locus">Rfer_1616</name>
</gene>
<evidence type="ECO:0000255" key="1">
    <source>
        <dbReference type="HAMAP-Rule" id="MF_01713"/>
    </source>
</evidence>
<protein>
    <recommendedName>
        <fullName evidence="1">Phosphonates import ATP-binding protein PhnC 2</fullName>
        <ecNumber evidence="1">7.3.2.2</ecNumber>
    </recommendedName>
</protein>
<name>PHNC2_ALBFT</name>
<keyword id="KW-0067">ATP-binding</keyword>
<keyword id="KW-0997">Cell inner membrane</keyword>
<keyword id="KW-1003">Cell membrane</keyword>
<keyword id="KW-0472">Membrane</keyword>
<keyword id="KW-0547">Nucleotide-binding</keyword>
<keyword id="KW-0918">Phosphonate transport</keyword>
<keyword id="KW-1185">Reference proteome</keyword>
<keyword id="KW-1278">Translocase</keyword>
<keyword id="KW-0813">Transport</keyword>
<feature type="chain" id="PRO_0000274740" description="Phosphonates import ATP-binding protein PhnC 2">
    <location>
        <begin position="1"/>
        <end position="277"/>
    </location>
</feature>
<feature type="domain" description="ABC transporter" evidence="1">
    <location>
        <begin position="3"/>
        <end position="251"/>
    </location>
</feature>
<feature type="binding site" evidence="1">
    <location>
        <begin position="40"/>
        <end position="47"/>
    </location>
    <ligand>
        <name>ATP</name>
        <dbReference type="ChEBI" id="CHEBI:30616"/>
    </ligand>
</feature>
<accession>Q21Y06</accession>
<proteinExistence type="inferred from homology"/>
<reference key="1">
    <citation type="submission" date="2006-02" db="EMBL/GenBank/DDBJ databases">
        <title>Complete sequence of chromosome of Rhodoferax ferrireducens DSM 15236.</title>
        <authorList>
            <person name="Copeland A."/>
            <person name="Lucas S."/>
            <person name="Lapidus A."/>
            <person name="Barry K."/>
            <person name="Detter J.C."/>
            <person name="Glavina del Rio T."/>
            <person name="Hammon N."/>
            <person name="Israni S."/>
            <person name="Pitluck S."/>
            <person name="Brettin T."/>
            <person name="Bruce D."/>
            <person name="Han C."/>
            <person name="Tapia R."/>
            <person name="Gilna P."/>
            <person name="Kiss H."/>
            <person name="Schmutz J."/>
            <person name="Larimer F."/>
            <person name="Land M."/>
            <person name="Kyrpides N."/>
            <person name="Ivanova N."/>
            <person name="Richardson P."/>
        </authorList>
    </citation>
    <scope>NUCLEOTIDE SEQUENCE [LARGE SCALE GENOMIC DNA]</scope>
    <source>
        <strain>ATCC BAA-621 / DSM 15236 / T118</strain>
    </source>
</reference>